<proteinExistence type="predicted"/>
<evidence type="ECO:0000255" key="1"/>
<evidence type="ECO:0000305" key="2"/>
<sequence>MPHFKRAAVYEEQKRTGKWGQLVEETKDRIPEYSNKTIAKISHLDNGCLWPEIKVSFSHHLSILQSMCLHFIISILFSKYIFVFLFAFLLPSAFPLFILHSTLFRKPCLSIIGFLKTKV</sequence>
<accession>Q12169</accession>
<accession>A0A1S0T0B7</accession>
<feature type="chain" id="PRO_0000299701" description="Uncharacterized protein YOR015W">
    <location>
        <begin position="1"/>
        <end position="119"/>
    </location>
</feature>
<feature type="transmembrane region" description="Helical" evidence="1">
    <location>
        <begin position="57"/>
        <end position="77"/>
    </location>
</feature>
<feature type="transmembrane region" description="Helical" evidence="1">
    <location>
        <begin position="80"/>
        <end position="100"/>
    </location>
</feature>
<protein>
    <recommendedName>
        <fullName>Uncharacterized protein YOR015W</fullName>
    </recommendedName>
</protein>
<dbReference type="EMBL" id="X87331">
    <property type="protein sequence ID" value="CAA60764.1"/>
    <property type="molecule type" value="Genomic_DNA"/>
</dbReference>
<dbReference type="EMBL" id="Z74923">
    <property type="protein sequence ID" value="CAA99205.1"/>
    <property type="molecule type" value="Genomic_DNA"/>
</dbReference>
<dbReference type="EMBL" id="BK006948">
    <property type="protein sequence ID" value="DAA80334.1"/>
    <property type="molecule type" value="Genomic_DNA"/>
</dbReference>
<dbReference type="PIR" id="S54621">
    <property type="entry name" value="S54621"/>
</dbReference>
<dbReference type="RefSeq" id="NP_001335814.1">
    <property type="nucleotide sequence ID" value="NM_001348876.1"/>
</dbReference>
<dbReference type="FunCoup" id="Q12169">
    <property type="interactions" value="24"/>
</dbReference>
<dbReference type="STRING" id="4932.YOR015W"/>
<dbReference type="PaxDb" id="4932-YOR015W"/>
<dbReference type="EnsemblFungi" id="YOR015W_mRNA">
    <property type="protein sequence ID" value="YOR015W"/>
    <property type="gene ID" value="YOR015W"/>
</dbReference>
<dbReference type="GeneID" id="854180"/>
<dbReference type="AGR" id="SGD:S000005541"/>
<dbReference type="SGD" id="S000005541">
    <property type="gene designation" value="YOR015W"/>
</dbReference>
<dbReference type="HOGENOM" id="CLU_2063313_0_0_1"/>
<dbReference type="InParanoid" id="Q12169"/>
<dbReference type="OrthoDB" id="4054043at2759"/>
<dbReference type="PRO" id="PR:Q12169"/>
<dbReference type="Proteomes" id="UP000002311">
    <property type="component" value="Chromosome XV"/>
</dbReference>
<dbReference type="RNAct" id="Q12169">
    <property type="molecule type" value="protein"/>
</dbReference>
<dbReference type="GO" id="GO:0016020">
    <property type="term" value="C:membrane"/>
    <property type="evidence" value="ECO:0007669"/>
    <property type="project" value="UniProtKB-SubCell"/>
</dbReference>
<organism>
    <name type="scientific">Saccharomyces cerevisiae (strain ATCC 204508 / S288c)</name>
    <name type="common">Baker's yeast</name>
    <dbReference type="NCBI Taxonomy" id="559292"/>
    <lineage>
        <taxon>Eukaryota</taxon>
        <taxon>Fungi</taxon>
        <taxon>Dikarya</taxon>
        <taxon>Ascomycota</taxon>
        <taxon>Saccharomycotina</taxon>
        <taxon>Saccharomycetes</taxon>
        <taxon>Saccharomycetales</taxon>
        <taxon>Saccharomycetaceae</taxon>
        <taxon>Saccharomyces</taxon>
    </lineage>
</organism>
<name>YO015_YEAST</name>
<reference key="1">
    <citation type="journal article" date="1997" name="Nature">
        <title>The nucleotide sequence of Saccharomyces cerevisiae chromosome XV.</title>
        <authorList>
            <person name="Dujon B."/>
            <person name="Albermann K."/>
            <person name="Aldea M."/>
            <person name="Alexandraki D."/>
            <person name="Ansorge W."/>
            <person name="Arino J."/>
            <person name="Benes V."/>
            <person name="Bohn C."/>
            <person name="Bolotin-Fukuhara M."/>
            <person name="Bordonne R."/>
            <person name="Boyer J."/>
            <person name="Camasses A."/>
            <person name="Casamayor A."/>
            <person name="Casas C."/>
            <person name="Cheret G."/>
            <person name="Cziepluch C."/>
            <person name="Daignan-Fornier B."/>
            <person name="Dang V.-D."/>
            <person name="de Haan M."/>
            <person name="Delius H."/>
            <person name="Durand P."/>
            <person name="Fairhead C."/>
            <person name="Feldmann H."/>
            <person name="Gaillon L."/>
            <person name="Galisson F."/>
            <person name="Gamo F.-J."/>
            <person name="Gancedo C."/>
            <person name="Goffeau A."/>
            <person name="Goulding S.E."/>
            <person name="Grivell L.A."/>
            <person name="Habbig B."/>
            <person name="Hand N.J."/>
            <person name="Hani J."/>
            <person name="Hattenhorst U."/>
            <person name="Hebling U."/>
            <person name="Hernando Y."/>
            <person name="Herrero E."/>
            <person name="Heumann K."/>
            <person name="Hiesel R."/>
            <person name="Hilger F."/>
            <person name="Hofmann B."/>
            <person name="Hollenberg C.P."/>
            <person name="Hughes B."/>
            <person name="Jauniaux J.-C."/>
            <person name="Kalogeropoulos A."/>
            <person name="Katsoulou C."/>
            <person name="Kordes E."/>
            <person name="Lafuente M.J."/>
            <person name="Landt O."/>
            <person name="Louis E.J."/>
            <person name="Maarse A.C."/>
            <person name="Madania A."/>
            <person name="Mannhaupt G."/>
            <person name="Marck C."/>
            <person name="Martin R.P."/>
            <person name="Mewes H.-W."/>
            <person name="Michaux G."/>
            <person name="Paces V."/>
            <person name="Parle-McDermott A.G."/>
            <person name="Pearson B.M."/>
            <person name="Perrin A."/>
            <person name="Pettersson B."/>
            <person name="Poch O."/>
            <person name="Pohl T.M."/>
            <person name="Poirey R."/>
            <person name="Portetelle D."/>
            <person name="Pujol A."/>
            <person name="Purnelle B."/>
            <person name="Ramezani Rad M."/>
            <person name="Rechmann S."/>
            <person name="Schwager C."/>
            <person name="Schweizer M."/>
            <person name="Sor F."/>
            <person name="Sterky F."/>
            <person name="Tarassov I.A."/>
            <person name="Teodoru C."/>
            <person name="Tettelin H."/>
            <person name="Thierry A."/>
            <person name="Tobiasch E."/>
            <person name="Tzermia M."/>
            <person name="Uhlen M."/>
            <person name="Unseld M."/>
            <person name="Valens M."/>
            <person name="Vandenbol M."/>
            <person name="Vetter I."/>
            <person name="Vlcek C."/>
            <person name="Voet M."/>
            <person name="Volckaert G."/>
            <person name="Voss H."/>
            <person name="Wambutt R."/>
            <person name="Wedler H."/>
            <person name="Wiemann S."/>
            <person name="Winsor B."/>
            <person name="Wolfe K.H."/>
            <person name="Zollner A."/>
            <person name="Zumstein E."/>
            <person name="Kleine K."/>
        </authorList>
    </citation>
    <scope>NUCLEOTIDE SEQUENCE [LARGE SCALE GENOMIC DNA]</scope>
    <source>
        <strain>ATCC 204508 / S288c</strain>
    </source>
</reference>
<reference key="2">
    <citation type="journal article" date="2014" name="G3 (Bethesda)">
        <title>The reference genome sequence of Saccharomyces cerevisiae: Then and now.</title>
        <authorList>
            <person name="Engel S.R."/>
            <person name="Dietrich F.S."/>
            <person name="Fisk D.G."/>
            <person name="Binkley G."/>
            <person name="Balakrishnan R."/>
            <person name="Costanzo M.C."/>
            <person name="Dwight S.S."/>
            <person name="Hitz B.C."/>
            <person name="Karra K."/>
            <person name="Nash R.S."/>
            <person name="Weng S."/>
            <person name="Wong E.D."/>
            <person name="Lloyd P."/>
            <person name="Skrzypek M.S."/>
            <person name="Miyasato S.R."/>
            <person name="Simison M."/>
            <person name="Cherry J.M."/>
        </authorList>
    </citation>
    <scope>GENOME REANNOTATION</scope>
    <source>
        <strain>ATCC 204508 / S288c</strain>
    </source>
</reference>
<keyword id="KW-0472">Membrane</keyword>
<keyword id="KW-1185">Reference proteome</keyword>
<keyword id="KW-0812">Transmembrane</keyword>
<keyword id="KW-1133">Transmembrane helix</keyword>
<gene>
    <name type="ordered locus">YOR015W</name>
    <name type="ORF">O2618</name>
    <name type="ORF">OR26.05</name>
    <name type="ORF">YOL303.5</name>
</gene>
<comment type="subcellular location">
    <subcellularLocation>
        <location evidence="2">Membrane</location>
        <topology evidence="2">Multi-pass membrane protein</topology>
    </subcellularLocation>
</comment>